<sequence length="126" mass="14402">MARIAGVDLPDHKKLEVALTYIYGIGWSKAREVCEQTGIPSIKKLGELTPEELNQLRRYIEQNIKVEGDLRREVQLNIKRLVDIGTYRGLRHVRGLPVRGQQTKTNARTRKGRRKGTVANKKKVSK</sequence>
<name>RS13_HYDS0</name>
<comment type="function">
    <text evidence="1">Located at the top of the head of the 30S subunit, it contacts several helices of the 16S rRNA. In the 70S ribosome it contacts the 23S rRNA (bridge B1a) and protein L5 of the 50S subunit (bridge B1b), connecting the 2 subunits; these bridges are implicated in subunit movement. Contacts the tRNAs in the A and P-sites.</text>
</comment>
<comment type="subunit">
    <text evidence="1">Part of the 30S ribosomal subunit. Forms a loose heterodimer with protein S19. Forms two bridges to the 50S subunit in the 70S ribosome.</text>
</comment>
<comment type="similarity">
    <text evidence="1">Belongs to the universal ribosomal protein uS13 family.</text>
</comment>
<reference key="1">
    <citation type="journal article" date="2009" name="J. Bacteriol.">
        <title>Complete and draft genome sequences of six members of the Aquificales.</title>
        <authorList>
            <person name="Reysenbach A.-L."/>
            <person name="Hamamura N."/>
            <person name="Podar M."/>
            <person name="Griffiths E."/>
            <person name="Ferreira S."/>
            <person name="Hochstein R."/>
            <person name="Heidelberg J."/>
            <person name="Johnson J."/>
            <person name="Mead D."/>
            <person name="Pohorille A."/>
            <person name="Sarmiento M."/>
            <person name="Schweighofer K."/>
            <person name="Seshadri R."/>
            <person name="Voytek M.A."/>
        </authorList>
    </citation>
    <scope>NUCLEOTIDE SEQUENCE [LARGE SCALE GENOMIC DNA]</scope>
    <source>
        <strain>Y04AAS1</strain>
    </source>
</reference>
<accession>B4U769</accession>
<feature type="chain" id="PRO_1000141273" description="Small ribosomal subunit protein uS13">
    <location>
        <begin position="1"/>
        <end position="126"/>
    </location>
</feature>
<feature type="region of interest" description="Disordered" evidence="2">
    <location>
        <begin position="96"/>
        <end position="126"/>
    </location>
</feature>
<feature type="compositionally biased region" description="Basic residues" evidence="2">
    <location>
        <begin position="107"/>
        <end position="126"/>
    </location>
</feature>
<dbReference type="EMBL" id="CP001130">
    <property type="protein sequence ID" value="ACG56980.1"/>
    <property type="molecule type" value="Genomic_DNA"/>
</dbReference>
<dbReference type="RefSeq" id="WP_012513336.1">
    <property type="nucleotide sequence ID" value="NC_011126.1"/>
</dbReference>
<dbReference type="SMR" id="B4U769"/>
<dbReference type="STRING" id="380749.HY04AAS1_0290"/>
<dbReference type="KEGG" id="hya:HY04AAS1_0290"/>
<dbReference type="eggNOG" id="COG0099">
    <property type="taxonomic scope" value="Bacteria"/>
</dbReference>
<dbReference type="HOGENOM" id="CLU_103849_1_2_0"/>
<dbReference type="OrthoDB" id="9803610at2"/>
<dbReference type="GO" id="GO:0005829">
    <property type="term" value="C:cytosol"/>
    <property type="evidence" value="ECO:0007669"/>
    <property type="project" value="TreeGrafter"/>
</dbReference>
<dbReference type="GO" id="GO:0015935">
    <property type="term" value="C:small ribosomal subunit"/>
    <property type="evidence" value="ECO:0007669"/>
    <property type="project" value="TreeGrafter"/>
</dbReference>
<dbReference type="GO" id="GO:0019843">
    <property type="term" value="F:rRNA binding"/>
    <property type="evidence" value="ECO:0007669"/>
    <property type="project" value="UniProtKB-UniRule"/>
</dbReference>
<dbReference type="GO" id="GO:0003735">
    <property type="term" value="F:structural constituent of ribosome"/>
    <property type="evidence" value="ECO:0007669"/>
    <property type="project" value="InterPro"/>
</dbReference>
<dbReference type="GO" id="GO:0000049">
    <property type="term" value="F:tRNA binding"/>
    <property type="evidence" value="ECO:0007669"/>
    <property type="project" value="UniProtKB-UniRule"/>
</dbReference>
<dbReference type="GO" id="GO:0006412">
    <property type="term" value="P:translation"/>
    <property type="evidence" value="ECO:0007669"/>
    <property type="project" value="UniProtKB-UniRule"/>
</dbReference>
<dbReference type="FunFam" id="1.10.8.50:FF:000001">
    <property type="entry name" value="30S ribosomal protein S13"/>
    <property type="match status" value="1"/>
</dbReference>
<dbReference type="FunFam" id="4.10.910.10:FF:000001">
    <property type="entry name" value="30S ribosomal protein S13"/>
    <property type="match status" value="1"/>
</dbReference>
<dbReference type="Gene3D" id="1.10.8.50">
    <property type="match status" value="1"/>
</dbReference>
<dbReference type="Gene3D" id="4.10.910.10">
    <property type="entry name" value="30s ribosomal protein s13, domain 2"/>
    <property type="match status" value="1"/>
</dbReference>
<dbReference type="HAMAP" id="MF_01315">
    <property type="entry name" value="Ribosomal_uS13"/>
    <property type="match status" value="1"/>
</dbReference>
<dbReference type="InterPro" id="IPR027437">
    <property type="entry name" value="Rbsml_uS13_C"/>
</dbReference>
<dbReference type="InterPro" id="IPR001892">
    <property type="entry name" value="Ribosomal_uS13"/>
</dbReference>
<dbReference type="InterPro" id="IPR010979">
    <property type="entry name" value="Ribosomal_uS13-like_H2TH"/>
</dbReference>
<dbReference type="InterPro" id="IPR019980">
    <property type="entry name" value="Ribosomal_uS13_bac-type"/>
</dbReference>
<dbReference type="InterPro" id="IPR018269">
    <property type="entry name" value="Ribosomal_uS13_CS"/>
</dbReference>
<dbReference type="NCBIfam" id="TIGR03631">
    <property type="entry name" value="uS13_bact"/>
    <property type="match status" value="1"/>
</dbReference>
<dbReference type="PANTHER" id="PTHR10871">
    <property type="entry name" value="30S RIBOSOMAL PROTEIN S13/40S RIBOSOMAL PROTEIN S18"/>
    <property type="match status" value="1"/>
</dbReference>
<dbReference type="PANTHER" id="PTHR10871:SF1">
    <property type="entry name" value="SMALL RIBOSOMAL SUBUNIT PROTEIN US13M"/>
    <property type="match status" value="1"/>
</dbReference>
<dbReference type="Pfam" id="PF00416">
    <property type="entry name" value="Ribosomal_S13"/>
    <property type="match status" value="1"/>
</dbReference>
<dbReference type="PIRSF" id="PIRSF002134">
    <property type="entry name" value="Ribosomal_S13"/>
    <property type="match status" value="1"/>
</dbReference>
<dbReference type="SUPFAM" id="SSF46946">
    <property type="entry name" value="S13-like H2TH domain"/>
    <property type="match status" value="1"/>
</dbReference>
<dbReference type="PROSITE" id="PS00646">
    <property type="entry name" value="RIBOSOMAL_S13_1"/>
    <property type="match status" value="1"/>
</dbReference>
<dbReference type="PROSITE" id="PS50159">
    <property type="entry name" value="RIBOSOMAL_S13_2"/>
    <property type="match status" value="1"/>
</dbReference>
<gene>
    <name evidence="1" type="primary">rpsM</name>
    <name type="ordered locus">HY04AAS1_0290</name>
</gene>
<protein>
    <recommendedName>
        <fullName evidence="1">Small ribosomal subunit protein uS13</fullName>
    </recommendedName>
    <alternativeName>
        <fullName evidence="3">30S ribosomal protein S13</fullName>
    </alternativeName>
</protein>
<keyword id="KW-0687">Ribonucleoprotein</keyword>
<keyword id="KW-0689">Ribosomal protein</keyword>
<keyword id="KW-0694">RNA-binding</keyword>
<keyword id="KW-0699">rRNA-binding</keyword>
<keyword id="KW-0820">tRNA-binding</keyword>
<evidence type="ECO:0000255" key="1">
    <source>
        <dbReference type="HAMAP-Rule" id="MF_01315"/>
    </source>
</evidence>
<evidence type="ECO:0000256" key="2">
    <source>
        <dbReference type="SAM" id="MobiDB-lite"/>
    </source>
</evidence>
<evidence type="ECO:0000305" key="3"/>
<proteinExistence type="inferred from homology"/>
<organism>
    <name type="scientific">Hydrogenobaculum sp. (strain Y04AAS1)</name>
    <dbReference type="NCBI Taxonomy" id="380749"/>
    <lineage>
        <taxon>Bacteria</taxon>
        <taxon>Pseudomonadati</taxon>
        <taxon>Aquificota</taxon>
        <taxon>Aquificia</taxon>
        <taxon>Aquificales</taxon>
        <taxon>Aquificaceae</taxon>
        <taxon>Hydrogenobaculum</taxon>
    </lineage>
</organism>